<organism>
    <name type="scientific">Methanopyrus kandleri (strain AV19 / DSM 6324 / JCM 9639 / NBRC 100938)</name>
    <dbReference type="NCBI Taxonomy" id="190192"/>
    <lineage>
        <taxon>Archaea</taxon>
        <taxon>Methanobacteriati</taxon>
        <taxon>Methanobacteriota</taxon>
        <taxon>Methanomada group</taxon>
        <taxon>Methanopyri</taxon>
        <taxon>Methanopyrales</taxon>
        <taxon>Methanopyraceae</taxon>
        <taxon>Methanopyrus</taxon>
    </lineage>
</organism>
<gene>
    <name evidence="1" type="primary">rpl21e</name>
    <name type="ordered locus">MK1660</name>
</gene>
<accession>Q8TUU3</accession>
<reference key="1">
    <citation type="journal article" date="2002" name="Proc. Natl. Acad. Sci. U.S.A.">
        <title>The complete genome of hyperthermophile Methanopyrus kandleri AV19 and monophyly of archaeal methanogens.</title>
        <authorList>
            <person name="Slesarev A.I."/>
            <person name="Mezhevaya K.V."/>
            <person name="Makarova K.S."/>
            <person name="Polushin N.N."/>
            <person name="Shcherbinina O.V."/>
            <person name="Shakhova V.V."/>
            <person name="Belova G.I."/>
            <person name="Aravind L."/>
            <person name="Natale D.A."/>
            <person name="Rogozin I.B."/>
            <person name="Tatusov R.L."/>
            <person name="Wolf Y.I."/>
            <person name="Stetter K.O."/>
            <person name="Malykh A.G."/>
            <person name="Koonin E.V."/>
            <person name="Kozyavkin S.A."/>
        </authorList>
    </citation>
    <scope>NUCLEOTIDE SEQUENCE [LARGE SCALE GENOMIC DNA]</scope>
    <source>
        <strain>AV19 / DSM 6324 / JCM 9639 / NBRC 100938</strain>
    </source>
</reference>
<protein>
    <recommendedName>
        <fullName evidence="1">Large ribosomal subunit protein eL21</fullName>
    </recommendedName>
    <alternativeName>
        <fullName evidence="3">50S ribosomal protein L21e</fullName>
    </alternativeName>
</protein>
<name>RL21_METKA</name>
<keyword id="KW-1185">Reference proteome</keyword>
<keyword id="KW-0687">Ribonucleoprotein</keyword>
<keyword id="KW-0689">Ribosomal protein</keyword>
<proteinExistence type="inferred from homology"/>
<comment type="similarity">
    <text evidence="1">Belongs to the eukaryotic ribosomal protein eL21 family.</text>
</comment>
<evidence type="ECO:0000255" key="1">
    <source>
        <dbReference type="HAMAP-Rule" id="MF_00369"/>
    </source>
</evidence>
<evidence type="ECO:0000256" key="2">
    <source>
        <dbReference type="SAM" id="MobiDB-lite"/>
    </source>
</evidence>
<evidence type="ECO:0000305" key="3"/>
<sequence length="102" mass="11873">MVRRSKGFRSRTRKKLRKKPRERGLSPLGPMTQEFEEGQKVHIVIDPSVHKGMPHPRYHGRTGEVVGRQGRAYIVKIRDGGKEKKLIVYPEHLKPQEQPELQ</sequence>
<feature type="chain" id="PRO_0000149690" description="Large ribosomal subunit protein eL21">
    <location>
        <begin position="1"/>
        <end position="102"/>
    </location>
</feature>
<feature type="region of interest" description="Disordered" evidence="2">
    <location>
        <begin position="1"/>
        <end position="33"/>
    </location>
</feature>
<feature type="compositionally biased region" description="Basic residues" evidence="2">
    <location>
        <begin position="1"/>
        <end position="21"/>
    </location>
</feature>
<dbReference type="EMBL" id="AE009439">
    <property type="protein sequence ID" value="AAM02873.1"/>
    <property type="molecule type" value="Genomic_DNA"/>
</dbReference>
<dbReference type="RefSeq" id="WP_011020028.1">
    <property type="nucleotide sequence ID" value="NC_003551.1"/>
</dbReference>
<dbReference type="SMR" id="Q8TUU3"/>
<dbReference type="FunCoup" id="Q8TUU3">
    <property type="interactions" value="119"/>
</dbReference>
<dbReference type="STRING" id="190192.MK1660"/>
<dbReference type="PaxDb" id="190192-MK1660"/>
<dbReference type="EnsemblBacteria" id="AAM02873">
    <property type="protein sequence ID" value="AAM02873"/>
    <property type="gene ID" value="MK1660"/>
</dbReference>
<dbReference type="GeneID" id="1478255"/>
<dbReference type="KEGG" id="mka:MK1660"/>
<dbReference type="PATRIC" id="fig|190192.8.peg.1824"/>
<dbReference type="HOGENOM" id="CLU_103610_1_1_2"/>
<dbReference type="InParanoid" id="Q8TUU3"/>
<dbReference type="OrthoDB" id="6295at2157"/>
<dbReference type="Proteomes" id="UP000001826">
    <property type="component" value="Chromosome"/>
</dbReference>
<dbReference type="GO" id="GO:1990904">
    <property type="term" value="C:ribonucleoprotein complex"/>
    <property type="evidence" value="ECO:0007669"/>
    <property type="project" value="UniProtKB-KW"/>
</dbReference>
<dbReference type="GO" id="GO:0005840">
    <property type="term" value="C:ribosome"/>
    <property type="evidence" value="ECO:0007669"/>
    <property type="project" value="UniProtKB-KW"/>
</dbReference>
<dbReference type="GO" id="GO:0003735">
    <property type="term" value="F:structural constituent of ribosome"/>
    <property type="evidence" value="ECO:0007669"/>
    <property type="project" value="InterPro"/>
</dbReference>
<dbReference type="GO" id="GO:0006412">
    <property type="term" value="P:translation"/>
    <property type="evidence" value="ECO:0007669"/>
    <property type="project" value="UniProtKB-UniRule"/>
</dbReference>
<dbReference type="FunFam" id="2.30.30.70:FF:000001">
    <property type="entry name" value="60S ribosomal protein L21"/>
    <property type="match status" value="1"/>
</dbReference>
<dbReference type="Gene3D" id="2.30.30.70">
    <property type="entry name" value="Ribosomal protein L21"/>
    <property type="match status" value="1"/>
</dbReference>
<dbReference type="HAMAP" id="MF_00369">
    <property type="entry name" value="Ribosomal_eL21"/>
    <property type="match status" value="1"/>
</dbReference>
<dbReference type="InterPro" id="IPR001147">
    <property type="entry name" value="Ribosomal_eL21"/>
</dbReference>
<dbReference type="InterPro" id="IPR022856">
    <property type="entry name" value="Ribosomal_eL21_arc"/>
</dbReference>
<dbReference type="InterPro" id="IPR018259">
    <property type="entry name" value="Ribosomal_eL21_CS"/>
</dbReference>
<dbReference type="InterPro" id="IPR036948">
    <property type="entry name" value="Ribosomal_eL21_sf"/>
</dbReference>
<dbReference type="InterPro" id="IPR008991">
    <property type="entry name" value="Translation_prot_SH3-like_sf"/>
</dbReference>
<dbReference type="NCBIfam" id="NF003303">
    <property type="entry name" value="PRK04306.1"/>
    <property type="match status" value="1"/>
</dbReference>
<dbReference type="PANTHER" id="PTHR20981">
    <property type="entry name" value="60S RIBOSOMAL PROTEIN L21"/>
    <property type="match status" value="1"/>
</dbReference>
<dbReference type="Pfam" id="PF01157">
    <property type="entry name" value="Ribosomal_L21e"/>
    <property type="match status" value="1"/>
</dbReference>
<dbReference type="SUPFAM" id="SSF50104">
    <property type="entry name" value="Translation proteins SH3-like domain"/>
    <property type="match status" value="1"/>
</dbReference>
<dbReference type="PROSITE" id="PS01171">
    <property type="entry name" value="RIBOSOMAL_L21E"/>
    <property type="match status" value="1"/>
</dbReference>